<organismHost>
    <name type="scientific">Aves</name>
    <dbReference type="NCBI Taxonomy" id="8782"/>
</organismHost>
<organismHost>
    <name type="scientific">Equus caballus</name>
    <name type="common">Horse</name>
    <dbReference type="NCBI Taxonomy" id="9796"/>
</organismHost>
<keyword id="KW-0106">Calcium</keyword>
<keyword id="KW-1015">Disulfide bond</keyword>
<keyword id="KW-0325">Glycoprotein</keyword>
<keyword id="KW-0326">Glycosidase</keyword>
<keyword id="KW-1032">Host cell membrane</keyword>
<keyword id="KW-1043">Host membrane</keyword>
<keyword id="KW-0378">Hydrolase</keyword>
<keyword id="KW-0472">Membrane</keyword>
<keyword id="KW-0479">Metal-binding</keyword>
<keyword id="KW-0735">Signal-anchor</keyword>
<keyword id="KW-0812">Transmembrane</keyword>
<keyword id="KW-1133">Transmembrane helix</keyword>
<keyword id="KW-0946">Virion</keyword>
<name>NRAM_I88A1</name>
<feature type="chain" id="PRO_0000078683" description="Neuraminidase">
    <location>
        <begin position="1"/>
        <end position="470"/>
    </location>
</feature>
<feature type="topological domain" description="Intravirion" evidence="1">
    <location>
        <begin position="1"/>
        <end position="14"/>
    </location>
</feature>
<feature type="transmembrane region" description="Helical" evidence="1">
    <location>
        <begin position="15"/>
        <end position="35"/>
    </location>
</feature>
<feature type="topological domain" description="Virion surface" evidence="1">
    <location>
        <begin position="36"/>
        <end position="470"/>
    </location>
</feature>
<feature type="region of interest" description="Involved in apical transport and lipid raft association" evidence="1">
    <location>
        <begin position="11"/>
        <end position="32"/>
    </location>
</feature>
<feature type="region of interest" description="Hypervariable stalk region" evidence="1">
    <location>
        <begin position="32"/>
        <end position="86"/>
    </location>
</feature>
<feature type="region of interest" description="Head of neuraminidase" evidence="1">
    <location>
        <begin position="89"/>
        <end position="470"/>
    </location>
</feature>
<feature type="active site" description="Proton donor/acceptor" evidence="1">
    <location>
        <position position="149"/>
    </location>
</feature>
<feature type="active site" description="Nucleophile" evidence="1">
    <location>
        <position position="402"/>
    </location>
</feature>
<feature type="binding site" evidence="1">
    <location>
        <position position="116"/>
    </location>
    <ligand>
        <name>substrate</name>
    </ligand>
</feature>
<feature type="binding site" evidence="1">
    <location>
        <position position="150"/>
    </location>
    <ligand>
        <name>substrate</name>
    </ligand>
</feature>
<feature type="binding site" evidence="1">
    <location>
        <begin position="275"/>
        <end position="276"/>
    </location>
    <ligand>
        <name>substrate</name>
    </ligand>
</feature>
<feature type="binding site" evidence="1">
    <location>
        <position position="291"/>
    </location>
    <ligand>
        <name>substrate</name>
    </ligand>
</feature>
<feature type="binding site" evidence="1">
    <location>
        <position position="292"/>
    </location>
    <ligand>
        <name>Ca(2+)</name>
        <dbReference type="ChEBI" id="CHEBI:29108"/>
    </ligand>
</feature>
<feature type="binding site" evidence="1">
    <location>
        <position position="296"/>
    </location>
    <ligand>
        <name>Ca(2+)</name>
        <dbReference type="ChEBI" id="CHEBI:29108"/>
    </ligand>
</feature>
<feature type="binding site" evidence="1">
    <location>
        <position position="322"/>
    </location>
    <ligand>
        <name>Ca(2+)</name>
        <dbReference type="ChEBI" id="CHEBI:29108"/>
    </ligand>
</feature>
<feature type="binding site" evidence="1">
    <location>
        <position position="368"/>
    </location>
    <ligand>
        <name>substrate</name>
    </ligand>
</feature>
<feature type="glycosylation site" description="N-linked (GlcNAc...) asparagine; by host" evidence="1">
    <location>
        <position position="46"/>
    </location>
</feature>
<feature type="glycosylation site" description="N-linked (GlcNAc...) asparagine; by host" evidence="1">
    <location>
        <position position="54"/>
    </location>
</feature>
<feature type="glycosylation site" description="N-linked (GlcNAc...) asparagine; by host" evidence="1">
    <location>
        <position position="67"/>
    </location>
</feature>
<feature type="glycosylation site" description="N-linked (GlcNAc...) asparagine; by host" evidence="1">
    <location>
        <position position="84"/>
    </location>
</feature>
<feature type="glycosylation site" description="N-linked (GlcNAc...) asparagine; by host" evidence="1">
    <location>
        <position position="144"/>
    </location>
</feature>
<feature type="glycosylation site" description="N-linked (GlcNAc...) asparagine; by host" evidence="1">
    <location>
        <position position="293"/>
    </location>
</feature>
<feature type="glycosylation site" description="N-linked (GlcNAc...) asparagine; by host" evidence="1">
    <location>
        <position position="398"/>
    </location>
</feature>
<feature type="disulfide bond" evidence="1">
    <location>
        <begin position="90"/>
        <end position="417"/>
    </location>
</feature>
<feature type="disulfide bond" evidence="1">
    <location>
        <begin position="122"/>
        <end position="127"/>
    </location>
</feature>
<feature type="disulfide bond" evidence="1">
    <location>
        <begin position="182"/>
        <end position="229"/>
    </location>
</feature>
<feature type="disulfide bond" evidence="1">
    <location>
        <begin position="231"/>
        <end position="236"/>
    </location>
</feature>
<feature type="disulfide bond" evidence="1">
    <location>
        <begin position="277"/>
        <end position="290"/>
    </location>
</feature>
<feature type="disulfide bond" evidence="1">
    <location>
        <begin position="279"/>
        <end position="288"/>
    </location>
</feature>
<feature type="disulfide bond" evidence="1">
    <location>
        <begin position="316"/>
        <end position="335"/>
    </location>
</feature>
<feature type="disulfide bond" evidence="1">
    <location>
        <begin position="421"/>
        <end position="446"/>
    </location>
</feature>
<accession>Q07570</accession>
<dbReference type="EC" id="3.2.1.18" evidence="1"/>
<dbReference type="EMBL" id="L06572">
    <property type="protein sequence ID" value="AAA43365.1"/>
    <property type="molecule type" value="Genomic_RNA"/>
</dbReference>
<dbReference type="SMR" id="Q07570"/>
<dbReference type="CAZy" id="GH34">
    <property type="family name" value="Glycoside Hydrolase Family 34"/>
</dbReference>
<dbReference type="GlyCosmos" id="Q07570">
    <property type="glycosylation" value="7 sites, No reported glycans"/>
</dbReference>
<dbReference type="GO" id="GO:0020002">
    <property type="term" value="C:host cell plasma membrane"/>
    <property type="evidence" value="ECO:0007669"/>
    <property type="project" value="UniProtKB-SubCell"/>
</dbReference>
<dbReference type="GO" id="GO:0016020">
    <property type="term" value="C:membrane"/>
    <property type="evidence" value="ECO:0007669"/>
    <property type="project" value="UniProtKB-UniRule"/>
</dbReference>
<dbReference type="GO" id="GO:0055036">
    <property type="term" value="C:virion membrane"/>
    <property type="evidence" value="ECO:0007669"/>
    <property type="project" value="UniProtKB-SubCell"/>
</dbReference>
<dbReference type="GO" id="GO:0004308">
    <property type="term" value="F:exo-alpha-sialidase activity"/>
    <property type="evidence" value="ECO:0007669"/>
    <property type="project" value="UniProtKB-UniRule"/>
</dbReference>
<dbReference type="GO" id="GO:0046872">
    <property type="term" value="F:metal ion binding"/>
    <property type="evidence" value="ECO:0007669"/>
    <property type="project" value="UniProtKB-UniRule"/>
</dbReference>
<dbReference type="GO" id="GO:0005975">
    <property type="term" value="P:carbohydrate metabolic process"/>
    <property type="evidence" value="ECO:0007669"/>
    <property type="project" value="InterPro"/>
</dbReference>
<dbReference type="GO" id="GO:0046761">
    <property type="term" value="P:viral budding from plasma membrane"/>
    <property type="evidence" value="ECO:0007669"/>
    <property type="project" value="UniProtKB-UniRule"/>
</dbReference>
<dbReference type="Gene3D" id="2.120.10.10">
    <property type="match status" value="1"/>
</dbReference>
<dbReference type="HAMAP" id="MF_04071">
    <property type="entry name" value="INFV_NRAM"/>
    <property type="match status" value="1"/>
</dbReference>
<dbReference type="InterPro" id="IPR001860">
    <property type="entry name" value="Glyco_hydro_34"/>
</dbReference>
<dbReference type="InterPro" id="IPR036278">
    <property type="entry name" value="Sialidase_sf"/>
</dbReference>
<dbReference type="Pfam" id="PF00064">
    <property type="entry name" value="Neur"/>
    <property type="match status" value="1"/>
</dbReference>
<dbReference type="SUPFAM" id="SSF50939">
    <property type="entry name" value="Sialidases"/>
    <property type="match status" value="1"/>
</dbReference>
<reference key="1">
    <citation type="journal article" date="1993" name="Virology">
        <title>Phylogenetic analysis of the N8 neuraminidase gene of influenza A viruses.</title>
        <authorList>
            <person name="Saito T."/>
            <person name="Kawaoka Y."/>
            <person name="Webster R.G."/>
        </authorList>
    </citation>
    <scope>NUCLEOTIDE SEQUENCE [GENOMIC RNA]</scope>
</reference>
<reference key="2">
    <citation type="journal article" date="2004" name="Virus Res.">
        <title>Assembly and budding of influenza virus.</title>
        <authorList>
            <person name="Nayak D.P."/>
            <person name="Hui E.K."/>
            <person name="Barman S."/>
        </authorList>
    </citation>
    <scope>REVIEW</scope>
</reference>
<reference key="3">
    <citation type="journal article" date="2005" name="N. Engl. J. Med.">
        <title>Neuraminidase inhibitors for influenza.</title>
        <authorList>
            <person name="Moscona A."/>
        </authorList>
    </citation>
    <scope>REVIEW</scope>
</reference>
<reference key="4">
    <citation type="journal article" date="2005" name="Biol. Pharm. Bull.">
        <title>Sialobiology of influenza: molecular mechanism of host range variation of influenza viruses.</title>
        <authorList>
            <person name="Suzuki Y."/>
        </authorList>
    </citation>
    <scope>REVIEW</scope>
</reference>
<proteinExistence type="inferred from homology"/>
<gene>
    <name evidence="1" type="primary">NA</name>
</gene>
<sequence>MNPNQKIITIGSISLGLVVFNVLLHVVSIIVTVLVLGRGGNNGICNETVVREYNETVRIEKITQWHNTSVVEYVPYWNEGTFMNNSEAICDVKGFAPFSKDNGIRIGSRGHVFVIREPFVSCSPTECRTFFLTQGSLLNDRHSNGTVKDRSPFRTLMSVEVGQSPNVYQARFEAVAWSATACHDGKKWMTIGVTGPDSKAVAVVHYGGVPTDVVNSWAGDILRTQESSCTCIQGNCYWVMTDGPANRQAQYRIYKANQGKIVGQTDVSFNGGHIEECSCYPNDGKVECVCRDNWTGTNRPVLVISPDLSYRVGYLCAGLPSDTPRGEDAQFTGSCTSPMGNQGYGVKGFGFRQGTDVWMGRTISRTSRSGFEILRVKNGWTQTSKEQVRKQVVVDNLNWSGYSGSFTLPVELSGKDCLVPCFWVEMIRGKPEEKTIWTSSSSIVMCGVDYEVADWSWHDGAILPFDIDKM</sequence>
<protein>
    <recommendedName>
        <fullName evidence="1">Neuraminidase</fullName>
        <ecNumber evidence="1">3.2.1.18</ecNumber>
    </recommendedName>
</protein>
<organism>
    <name type="scientific">Influenza A virus (strain A/Duck/Burjatia/652/1988 H3N8)</name>
    <dbReference type="NCBI Taxonomy" id="387204"/>
    <lineage>
        <taxon>Viruses</taxon>
        <taxon>Riboviria</taxon>
        <taxon>Orthornavirae</taxon>
        <taxon>Negarnaviricota</taxon>
        <taxon>Polyploviricotina</taxon>
        <taxon>Insthoviricetes</taxon>
        <taxon>Articulavirales</taxon>
        <taxon>Orthomyxoviridae</taxon>
        <taxon>Alphainfluenzavirus</taxon>
        <taxon>Alphainfluenzavirus influenzae</taxon>
        <taxon>Influenza A virus</taxon>
    </lineage>
</organism>
<evidence type="ECO:0000255" key="1">
    <source>
        <dbReference type="HAMAP-Rule" id="MF_04071"/>
    </source>
</evidence>
<comment type="function">
    <text evidence="1">Catalyzes the removal of terminal sialic acid residues from viral and cellular glycoconjugates. Cleaves off the terminal sialic acids on the glycosylated HA during virus budding to facilitate virus release. Additionally helps virus spread through the circulation by further removing sialic acids from the cell surface. These cleavages prevent self-aggregation and ensure the efficient spread of the progeny virus from cell to cell. Otherwise, infection would be limited to one round of replication. Described as a receptor-destroying enzyme because it cleaves a terminal sialic acid from the cellular receptors. May facilitate viral invasion of the upper airways by cleaving the sialic acid moieties on the mucin of the airway epithelial cells. Likely to plays a role in the budding process through its association with lipid rafts during intracellular transport. May additionally display a raft-association independent effect on budding. Plays a role in the determination of host range restriction on replication and virulence. Sialidase activity in late endosome/lysosome traffic seems to enhance virus replication.</text>
</comment>
<comment type="catalytic activity">
    <reaction evidence="1">
        <text>Hydrolysis of alpha-(2-&gt;3)-, alpha-(2-&gt;6)-, alpha-(2-&gt;8)- glycosidic linkages of terminal sialic acid residues in oligosaccharides, glycoproteins, glycolipids, colominic acid and synthetic substrates.</text>
        <dbReference type="EC" id="3.2.1.18"/>
    </reaction>
</comment>
<comment type="cofactor">
    <cofactor evidence="1">
        <name>Ca(2+)</name>
        <dbReference type="ChEBI" id="CHEBI:29108"/>
    </cofactor>
</comment>
<comment type="activity regulation">
    <text evidence="1">Inhibited by the neuraminidase inhibitors zanamivir (Relenza) and oseltamivir (Tamiflu). These drugs interfere with the release of progeny virus from infected cells and are effective against all influenza strains. Resistance to neuraminidase inhibitors is quite rare.</text>
</comment>
<comment type="subunit">
    <text evidence="1">Homotetramer.</text>
</comment>
<comment type="subcellular location">
    <subcellularLocation>
        <location evidence="1">Virion membrane</location>
    </subcellularLocation>
    <subcellularLocation>
        <location evidence="1">Host apical cell membrane</location>
        <topology evidence="1">Single-pass type II membrane protein</topology>
    </subcellularLocation>
    <text evidence="1">Preferentially accumulates at the apical plasma membrane in infected polarized epithelial cells, which is the virus assembly site. Uses lipid rafts for cell surface transport and apical sorting. In the virion, forms a mushroom-shaped spike on the surface of the membrane.</text>
</comment>
<comment type="domain">
    <text evidence="1">Intact N-terminus is essential for virion morphogenesis. Possesses two apical sorting signals, one in the ectodomain, which is likely to be a glycan, and the other in the transmembrane domain. The transmembrane domain also plays a role in lipid raft association.</text>
</comment>
<comment type="PTM">
    <text evidence="1">N-glycosylated.</text>
</comment>
<comment type="miscellaneous">
    <text>The influenza A genome consist of 8 RNA segments. Genetic variation of hemagglutinin and/or neuraminidase genes results in the emergence of new influenza strains. The mechanism of variation can be the result of point mutations or the result of genetic reassortment between segments of two different strains.</text>
</comment>
<comment type="similarity">
    <text evidence="1">Belongs to the glycosyl hydrolase 34 family.</text>
</comment>